<reference key="1">
    <citation type="journal article" date="2009" name="Nature">
        <title>Evolution of pathogenicity and sexual reproduction in eight Candida genomes.</title>
        <authorList>
            <person name="Butler G."/>
            <person name="Rasmussen M.D."/>
            <person name="Lin M.F."/>
            <person name="Santos M.A.S."/>
            <person name="Sakthikumar S."/>
            <person name="Munro C.A."/>
            <person name="Rheinbay E."/>
            <person name="Grabherr M."/>
            <person name="Forche A."/>
            <person name="Reedy J.L."/>
            <person name="Agrafioti I."/>
            <person name="Arnaud M.B."/>
            <person name="Bates S."/>
            <person name="Brown A.J.P."/>
            <person name="Brunke S."/>
            <person name="Costanzo M.C."/>
            <person name="Fitzpatrick D.A."/>
            <person name="de Groot P.W.J."/>
            <person name="Harris D."/>
            <person name="Hoyer L.L."/>
            <person name="Hube B."/>
            <person name="Klis F.M."/>
            <person name="Kodira C."/>
            <person name="Lennard N."/>
            <person name="Logue M.E."/>
            <person name="Martin R."/>
            <person name="Neiman A.M."/>
            <person name="Nikolaou E."/>
            <person name="Quail M.A."/>
            <person name="Quinn J."/>
            <person name="Santos M.C."/>
            <person name="Schmitzberger F.F."/>
            <person name="Sherlock G."/>
            <person name="Shah P."/>
            <person name="Silverstein K.A.T."/>
            <person name="Skrzypek M.S."/>
            <person name="Soll D."/>
            <person name="Staggs R."/>
            <person name="Stansfield I."/>
            <person name="Stumpf M.P.H."/>
            <person name="Sudbery P.E."/>
            <person name="Srikantha T."/>
            <person name="Zeng Q."/>
            <person name="Berman J."/>
            <person name="Berriman M."/>
            <person name="Heitman J."/>
            <person name="Gow N.A.R."/>
            <person name="Lorenz M.C."/>
            <person name="Birren B.W."/>
            <person name="Kellis M."/>
            <person name="Cuomo C.A."/>
        </authorList>
    </citation>
    <scope>NUCLEOTIDE SEQUENCE [LARGE SCALE GENOMIC DNA]</scope>
    <source>
        <strain>ATCC 6260 / CBS 566 / DSM 6381 / JCM 1539 / NBRC 10279 / NRRL Y-324</strain>
    </source>
</reference>
<organism>
    <name type="scientific">Meyerozyma guilliermondii (strain ATCC 6260 / CBS 566 / DSM 6381 / JCM 1539 / NBRC 10279 / NRRL Y-324)</name>
    <name type="common">Yeast</name>
    <name type="synonym">Candida guilliermondii</name>
    <dbReference type="NCBI Taxonomy" id="294746"/>
    <lineage>
        <taxon>Eukaryota</taxon>
        <taxon>Fungi</taxon>
        <taxon>Dikarya</taxon>
        <taxon>Ascomycota</taxon>
        <taxon>Saccharomycotina</taxon>
        <taxon>Pichiomycetes</taxon>
        <taxon>Debaryomycetaceae</taxon>
        <taxon>Meyerozyma</taxon>
    </lineage>
</organism>
<proteinExistence type="inferred from homology"/>
<gene>
    <name type="primary">LCL3</name>
    <name type="ORF">PGUG_04999</name>
</gene>
<dbReference type="EC" id="3.1.-.-"/>
<dbReference type="EMBL" id="CH408160">
    <property type="protein sequence ID" value="EDK40901.1"/>
    <property type="molecule type" value="Genomic_DNA"/>
</dbReference>
<dbReference type="RefSeq" id="XP_001483044.1">
    <property type="nucleotide sequence ID" value="XM_001482994.1"/>
</dbReference>
<dbReference type="SMR" id="A5DNZ8"/>
<dbReference type="FunCoup" id="A5DNZ8">
    <property type="interactions" value="15"/>
</dbReference>
<dbReference type="STRING" id="294746.A5DNZ8"/>
<dbReference type="GeneID" id="5125052"/>
<dbReference type="KEGG" id="pgu:PGUG_04999"/>
<dbReference type="VEuPathDB" id="FungiDB:PGUG_04999"/>
<dbReference type="eggNOG" id="ENOG502S1U4">
    <property type="taxonomic scope" value="Eukaryota"/>
</dbReference>
<dbReference type="HOGENOM" id="CLU_046484_0_1_1"/>
<dbReference type="InParanoid" id="A5DNZ8"/>
<dbReference type="OMA" id="IYHTPGG"/>
<dbReference type="OrthoDB" id="430293at2759"/>
<dbReference type="Proteomes" id="UP000001997">
    <property type="component" value="Unassembled WGS sequence"/>
</dbReference>
<dbReference type="GO" id="GO:0016020">
    <property type="term" value="C:membrane"/>
    <property type="evidence" value="ECO:0007669"/>
    <property type="project" value="UniProtKB-SubCell"/>
</dbReference>
<dbReference type="GO" id="GO:0005739">
    <property type="term" value="C:mitochondrion"/>
    <property type="evidence" value="ECO:0007669"/>
    <property type="project" value="UniProtKB-SubCell"/>
</dbReference>
<dbReference type="GO" id="GO:0004519">
    <property type="term" value="F:endonuclease activity"/>
    <property type="evidence" value="ECO:0007669"/>
    <property type="project" value="UniProtKB-KW"/>
</dbReference>
<dbReference type="GO" id="GO:0046872">
    <property type="term" value="F:metal ion binding"/>
    <property type="evidence" value="ECO:0007669"/>
    <property type="project" value="UniProtKB-KW"/>
</dbReference>
<dbReference type="FunFam" id="2.40.50.90:FF:000035">
    <property type="entry name" value="Probable endonuclease LCL3"/>
    <property type="match status" value="1"/>
</dbReference>
<dbReference type="Gene3D" id="2.40.50.90">
    <property type="match status" value="1"/>
</dbReference>
<dbReference type="InterPro" id="IPR035437">
    <property type="entry name" value="SNase_OB-fold_sf"/>
</dbReference>
<dbReference type="InterPro" id="IPR016071">
    <property type="entry name" value="Staphylococal_nuclease_OB-fold"/>
</dbReference>
<dbReference type="PANTHER" id="PTHR12302">
    <property type="entry name" value="EBNA2 BINDING PROTEIN P100"/>
    <property type="match status" value="1"/>
</dbReference>
<dbReference type="PANTHER" id="PTHR12302:SF3">
    <property type="entry name" value="SERINE_THREONINE-PROTEIN KINASE 31"/>
    <property type="match status" value="1"/>
</dbReference>
<dbReference type="Pfam" id="PF00565">
    <property type="entry name" value="SNase"/>
    <property type="match status" value="1"/>
</dbReference>
<dbReference type="SMART" id="SM00318">
    <property type="entry name" value="SNc"/>
    <property type="match status" value="1"/>
</dbReference>
<dbReference type="SUPFAM" id="SSF50199">
    <property type="entry name" value="Staphylococcal nuclease"/>
    <property type="match status" value="1"/>
</dbReference>
<dbReference type="PROSITE" id="PS50830">
    <property type="entry name" value="TNASE_3"/>
    <property type="match status" value="1"/>
</dbReference>
<protein>
    <recommendedName>
        <fullName>Probable endonuclease LCL3</fullName>
        <ecNumber>3.1.-.-</ecNumber>
    </recommendedName>
</protein>
<evidence type="ECO:0000250" key="1"/>
<evidence type="ECO:0000255" key="2"/>
<evidence type="ECO:0000255" key="3">
    <source>
        <dbReference type="PROSITE-ProRule" id="PRU00272"/>
    </source>
</evidence>
<evidence type="ECO:0000305" key="4"/>
<comment type="subcellular location">
    <subcellularLocation>
        <location>Mitochondrion</location>
    </subcellularLocation>
    <subcellularLocation>
        <location evidence="1">Membrane</location>
        <topology evidence="1">Single-pass membrane protein</topology>
    </subcellularLocation>
</comment>
<comment type="similarity">
    <text evidence="4">Belongs to the LCL3 family.</text>
</comment>
<feature type="chain" id="PRO_0000408676" description="Probable endonuclease LCL3">
    <location>
        <begin position="1"/>
        <end position="228"/>
    </location>
</feature>
<feature type="transmembrane region" description="Helical" evidence="2">
    <location>
        <begin position="13"/>
        <end position="30"/>
    </location>
</feature>
<feature type="domain" description="TNase-like" evidence="3">
    <location>
        <begin position="52"/>
        <end position="210"/>
    </location>
</feature>
<feature type="active site" evidence="3">
    <location>
        <position position="101"/>
    </location>
</feature>
<feature type="active site" evidence="3">
    <location>
        <position position="109"/>
    </location>
</feature>
<feature type="active site" evidence="3">
    <location>
        <position position="149"/>
    </location>
</feature>
<feature type="binding site" evidence="3">
    <location>
        <position position="106"/>
    </location>
    <ligand>
        <name>Ca(2+)</name>
        <dbReference type="ChEBI" id="CHEBI:29108"/>
    </ligand>
</feature>
<sequence>MGDSVSVLHPKVLLVSAGFTTSLFVGFNLYRRYCRRIRTYLDLTPSILDNQRQLYGKVTRVGDGDNFRFYHTPGGIFLGWGWLRKVPETRSALKDETLMIRLCGVDAPERSHWGKPAQPFSEEALQWLRNYVMGRYVTITPYSIDQYKRVVARAQVWKWTGRKDVSAEMIRTGIGVVYESKVGAEFGDNESWYRSLQNRAKLLRRGVWSLGKKMTTPGQFKKTYYRGE</sequence>
<name>LCL3_PICGU</name>
<accession>A5DNZ8</accession>
<keyword id="KW-0106">Calcium</keyword>
<keyword id="KW-0255">Endonuclease</keyword>
<keyword id="KW-0378">Hydrolase</keyword>
<keyword id="KW-0472">Membrane</keyword>
<keyword id="KW-0479">Metal-binding</keyword>
<keyword id="KW-0496">Mitochondrion</keyword>
<keyword id="KW-0540">Nuclease</keyword>
<keyword id="KW-1185">Reference proteome</keyword>
<keyword id="KW-0812">Transmembrane</keyword>
<keyword id="KW-1133">Transmembrane helix</keyword>